<organism>
    <name type="scientific">Solanum lycopersicum</name>
    <name type="common">Tomato</name>
    <name type="synonym">Lycopersicon esculentum</name>
    <dbReference type="NCBI Taxonomy" id="4081"/>
    <lineage>
        <taxon>Eukaryota</taxon>
        <taxon>Viridiplantae</taxon>
        <taxon>Streptophyta</taxon>
        <taxon>Embryophyta</taxon>
        <taxon>Tracheophyta</taxon>
        <taxon>Spermatophyta</taxon>
        <taxon>Magnoliopsida</taxon>
        <taxon>eudicotyledons</taxon>
        <taxon>Gunneridae</taxon>
        <taxon>Pentapetalae</taxon>
        <taxon>asterids</taxon>
        <taxon>lamiids</taxon>
        <taxon>Solanales</taxon>
        <taxon>Solanaceae</taxon>
        <taxon>Solanoideae</taxon>
        <taxon>Solaneae</taxon>
        <taxon>Solanum</taxon>
        <taxon>Solanum subgen. Lycopersicon</taxon>
    </lineage>
</organism>
<sequence>MNGVLCSSSSSFHSYPSIFTKFQSSPIWSFSISVTPLCSRRAKRMAHSIARDTLGLTHTNQSDAPKISFAAKEIDLVEWKGDILTVGATEKDLARDGNSKFQNPLLQKLDSKLSGLLSEASSEEDFSGKAGQSTILRLPGLGSKRIALVGLGSPTSSTAAYRCLGEAAAAAAKSAQASNIAIALASTDGLSAELKLSSASAITTGAVLGTFEDNRFKSESKKPTLKSLDILGLGTGPEIEKKIKYAADVCAGVILGRELVNAPANVLTPAVLAEEAKKIASTYSDVFSANILDVEQCKELKMGSYLRVAAASANPAHFIHLCYKPSSGEIKKKIALVGKGLTFDSGGYNIKTGPGCSIELMKFDMGGAAAVLGAAKALGQIKPAGVEVHFIVAACENMISGTGMRPGDIITASNGKTIEVNNTDAEGRLTLSVGISCNQGVEKIVDLATLTGACVVALGPSIAGIFTPSDDLAKEVVAASEVSGEKLWRLPMEDSYWDSMKSGVADMVNTGGRPGGAITAALFLKQFVNEKVQWMHIDLAGPVWSDKKKNATGFGVSTLVEWVLKNSTN</sequence>
<comment type="function">
    <text evidence="5 7 9">Catalyzes the removal of unsubstituted N-terminal amino acids from various peptides (PubMed:12746529). When associated as homohexamer, catalyzes the proteolyzes of Xaa-Leu dipeptides (PubMed:12746529). Possesses leucine aminopeptidase activity against the model substrate leucine-amido methyl coumarin (PubMed:22493451). Presumably involved in the processing and regular turnover of intracellular proteins (Probable).</text>
</comment>
<comment type="function">
    <text evidence="7">Functions as a molecular chaperone to protect proteins from heat-induced damage.</text>
</comment>
<comment type="catalytic activity">
    <reaction evidence="5">
        <text>Release of an N-terminal amino acid, Xaa-|-Yaa-, in which Xaa is preferably Leu, but may be other amino acids including Pro although not Arg or Lys, and Yaa may be Pro. Amino acid amides and methyl esters are also readily hydrolyzed, but rates on arylamides are exceedingly low.</text>
        <dbReference type="EC" id="3.4.11.1"/>
    </reaction>
</comment>
<comment type="catalytic activity">
    <reaction evidence="1">
        <text>Release of N-terminal proline from a peptide.</text>
        <dbReference type="EC" id="3.4.11.5"/>
    </reaction>
</comment>
<comment type="cofactor">
    <cofactor evidence="2">
        <name>Mn(2+)</name>
        <dbReference type="ChEBI" id="CHEBI:29035"/>
    </cofactor>
    <text evidence="2">Binds 2 Mn(2+) ions per subunit.</text>
</comment>
<comment type="biophysicochemical properties">
    <kinetics>
        <Vmax evidence="5">0.59 umol/min/mg enzyme with Leu-acyl-beta-naphthylamide as substrate</Vmax>
        <Vmax evidence="5">0.83 umol/min/mg enzyme with Met-acyl-beta-naphthylamide as substrate</Vmax>
        <Vmax evidence="5">0.23 umol/min/mg enzyme with Arg-acyl-beta-naphthylamide as substrate</Vmax>
        <Vmax evidence="5">0.15 umol/min/mg enzyme with Ile-acyl-beta-naphthylamide as substrate</Vmax>
        <Vmax evidence="5">0.16 umol/min/mg enzyme with Val-acyl-beta-naphthylamide as substrate</Vmax>
        <Vmax evidence="5">0.04 umol/min/mg enzyme with Ser-acyl-beta-naphthylamide as substrate</Vmax>
        <Vmax evidence="5">0.65 umol/min/mg enzyme with Phe-acyl-beta-naphthylamide as substrate</Vmax>
        <Vmax evidence="5">0.12 umol/min/mg enzyme with Gly-acyl-beta-naphthylamide as substrate</Vmax>
    </kinetics>
</comment>
<comment type="subunit">
    <text evidence="7">Homohexamer (dimer of homotrimers).</text>
</comment>
<comment type="subcellular location">
    <subcellularLocation>
        <location evidence="6">Plastid</location>
        <location evidence="6">Chloroplast</location>
    </subcellularLocation>
</comment>
<comment type="tissue specificity">
    <text evidence="4 5 6">Expressed constitutively at low levels (PubMed:11204785). Expressed in vegetative and reproductive organs, including leaves, stems, roots, cotyledons (after imbibition), pistils, sepals, petals, stamens, and floral buds (at protein level) (PubMed:12746529). Present at very low levels in healthy leaves (PubMed:12746529, PubMed:17896114).</text>
</comment>
<comment type="developmental stage">
    <text evidence="5">Expressed in cotyledons during seedlings development after imbibition and following emergence from seed coats (at protein level).</text>
</comment>
<comment type="induction">
    <text evidence="5">By wounding.</text>
</comment>
<comment type="similarity">
    <text evidence="9">Belongs to the peptidase M17 family.</text>
</comment>
<reference key="1">
    <citation type="journal article" date="1995" name="Plant Mol. Biol.">
        <title>Nature and regulation of pistil-expressed genes in tomato.</title>
        <authorList>
            <person name="Milligan S.B."/>
            <person name="Gasser C.S."/>
        </authorList>
    </citation>
    <scope>NUCLEOTIDE SEQUENCE [MRNA]</scope>
    <source>
        <strain>cv. VF36</strain>
        <tissue>Pistil</tissue>
    </source>
</reference>
<reference key="2">
    <citation type="journal article" date="2000" name="Planta">
        <title>Leucine aminopeptidases: the ubiquity of LAP-N and the specificity of LAP-A.</title>
        <authorList>
            <person name="Chao W.S."/>
            <person name="Pautot V."/>
            <person name="Holzer F.M."/>
            <person name="Walling L.L."/>
        </authorList>
    </citation>
    <scope>GENE FAMILY</scope>
    <scope>NOMENCLATURE</scope>
    <source>
        <strain>cv. Peto 238R</strain>
        <strain>cv. VFNT Cherry</strain>
    </source>
</reference>
<reference key="3">
    <citation type="journal article" date="2001" name="Mol. Plant Microbe Interact.">
        <title>The induction of tomato leucine aminopeptidase genes (LapA) after Pseudomonas syringae pv. tomato infection is primarily a wound response triggered by coronatine.</title>
        <authorList>
            <person name="Pautot V."/>
            <person name="Holzer F.M."/>
            <person name="Chaufaux J."/>
            <person name="Walling L.L."/>
        </authorList>
    </citation>
    <scope>TISSUE SPECIFICITY</scope>
    <source>
        <strain>cv. UC82B</strain>
    </source>
</reference>
<reference key="4">
    <citation type="journal article" date="2003" name="Plant Physiol.">
        <title>Isolation and characterization of the neutral leucine aminopeptidase (LapN) of tomato.</title>
        <authorList>
            <person name="Tu C.-J."/>
            <person name="Park S.-Y."/>
            <person name="Walling L.L."/>
        </authorList>
    </citation>
    <scope>FUNCTION</scope>
    <scope>CATALYTIC ACTIVITY</scope>
    <scope>BIOPHYSICOCHEMICAL PROPERTIES</scope>
    <scope>TISSUE SPECIFICITY</scope>
    <scope>DEVELOPMENTAL STAGE</scope>
    <scope>INDUCTION BY WOUNDING</scope>
    <source>
        <strain>cv. Peto 238R</strain>
        <strain>cv. VFNT Cherry</strain>
    </source>
</reference>
<reference key="5">
    <citation type="journal article" date="2008" name="Planta">
        <title>Targeting and localization of wound-inducible leucine aminopeptidase A in tomato leaves.</title>
        <authorList>
            <person name="Narvaez-Vasquez J."/>
            <person name="Tu C.-J."/>
            <person name="Park S.-Y."/>
            <person name="Walling L.L."/>
        </authorList>
    </citation>
    <scope>SUBCELLULAR LOCATION</scope>
    <scope>TISSUE SPECIFICITY</scope>
    <source>
        <strain>cv. UC82B</strain>
    </source>
</reference>
<reference key="6">
    <citation type="journal article" date="2012" name="J. Biol. Chem.">
        <title>Plant leucine aminopeptidases moonlight as molecular chaperones to alleviate stress-induced damage.</title>
        <authorList>
            <person name="Scranton M.A."/>
            <person name="Yee A."/>
            <person name="Park S.-Y."/>
            <person name="Walling L.L."/>
        </authorList>
    </citation>
    <scope>FUNCTION</scope>
    <scope>MUTAGENESIS OF LYS-351</scope>
    <scope>SUBUNIT</scope>
</reference>
<protein>
    <recommendedName>
        <fullName evidence="8">Neutral leucine aminopeptidase, chloroplastic</fullName>
        <shortName evidence="8">LAP-N</shortName>
        <ecNumber evidence="5">3.4.11.1</ecNumber>
    </recommendedName>
    <alternativeName>
        <fullName>Leucyl aminopeptidase N</fullName>
    </alternativeName>
    <alternativeName>
        <fullName>Proline aminopeptidase N</fullName>
        <ecNumber>3.4.11.5</ecNumber>
    </alternativeName>
    <alternativeName>
        <fullName>Prolyl aminopeptidase N</fullName>
    </alternativeName>
</protein>
<feature type="transit peptide" description="Chloroplast" evidence="3">
    <location>
        <begin position="1"/>
        <end position="48"/>
    </location>
</feature>
<feature type="chain" id="PRO_0000026804" description="Neutral leucine aminopeptidase, chloroplastic">
    <location>
        <begin position="49"/>
        <end position="569"/>
    </location>
</feature>
<feature type="active site" evidence="3">
    <location>
        <position position="351"/>
    </location>
</feature>
<feature type="active site" evidence="3">
    <location>
        <position position="428"/>
    </location>
</feature>
<feature type="binding site" evidence="2">
    <location>
        <position position="339"/>
    </location>
    <ligand>
        <name>Mn(2+)</name>
        <dbReference type="ChEBI" id="CHEBI:29035"/>
        <label>1</label>
    </ligand>
</feature>
<feature type="binding site" evidence="2">
    <location>
        <position position="344"/>
    </location>
    <ligand>
        <name>Mn(2+)</name>
        <dbReference type="ChEBI" id="CHEBI:29035"/>
        <label>1</label>
    </ligand>
</feature>
<feature type="binding site" evidence="2">
    <location>
        <position position="344"/>
    </location>
    <ligand>
        <name>Mn(2+)</name>
        <dbReference type="ChEBI" id="CHEBI:29035"/>
        <label>2</label>
    </ligand>
</feature>
<feature type="binding site" evidence="2">
    <location>
        <position position="364"/>
    </location>
    <ligand>
        <name>Mn(2+)</name>
        <dbReference type="ChEBI" id="CHEBI:29035"/>
        <label>1</label>
    </ligand>
</feature>
<feature type="binding site" evidence="2">
    <location>
        <position position="424"/>
    </location>
    <ligand>
        <name>Mn(2+)</name>
        <dbReference type="ChEBI" id="CHEBI:29035"/>
        <label>2</label>
    </ligand>
</feature>
<feature type="binding site" evidence="2">
    <location>
        <position position="426"/>
    </location>
    <ligand>
        <name>Mn(2+)</name>
        <dbReference type="ChEBI" id="CHEBI:29035"/>
        <label>1</label>
    </ligand>
</feature>
<feature type="binding site" evidence="2">
    <location>
        <position position="426"/>
    </location>
    <ligand>
        <name>Mn(2+)</name>
        <dbReference type="ChEBI" id="CHEBI:29035"/>
        <label>2</label>
    </ligand>
</feature>
<feature type="mutagenesis site" description="Strongly impaired activity, normal homohexamers formation, but reduced chaperone abilities." evidence="7">
    <original>K</original>
    <variation>E</variation>
    <variation>R</variation>
    <location>
        <position position="351"/>
    </location>
</feature>
<feature type="mutagenesis site" description="Strongly impaired activity but normal homohexamers formation." evidence="7">
    <original>K</original>
    <variation>L</variation>
    <variation>C</variation>
    <variation>M</variation>
    <variation>G</variation>
    <variation>T</variation>
    <variation>P</variation>
    <location>
        <position position="351"/>
    </location>
</feature>
<gene>
    <name evidence="8" type="primary">LapN</name>
    <name evidence="9" type="ordered locus">Solyc12g010040</name>
</gene>
<dbReference type="EC" id="3.4.11.1" evidence="5"/>
<dbReference type="EC" id="3.4.11.5"/>
<dbReference type="EMBL" id="U20594">
    <property type="protein sequence ID" value="AAA80499.1"/>
    <property type="molecule type" value="mRNA"/>
</dbReference>
<dbReference type="PIR" id="S57812">
    <property type="entry name" value="S57812"/>
</dbReference>
<dbReference type="SMR" id="Q42876"/>
<dbReference type="FunCoup" id="Q42876">
    <property type="interactions" value="2130"/>
</dbReference>
<dbReference type="STRING" id="4081.Q42876"/>
<dbReference type="MEROPS" id="M17.A03"/>
<dbReference type="PaxDb" id="4081-Solyc12g010040.1.1"/>
<dbReference type="ProMEX" id="Q42876"/>
<dbReference type="eggNOG" id="KOG2597">
    <property type="taxonomic scope" value="Eukaryota"/>
</dbReference>
<dbReference type="InParanoid" id="Q42876"/>
<dbReference type="Proteomes" id="UP000004994">
    <property type="component" value="Unplaced"/>
</dbReference>
<dbReference type="ExpressionAtlas" id="Q42876">
    <property type="expression patterns" value="baseline and differential"/>
</dbReference>
<dbReference type="GO" id="GO:0009507">
    <property type="term" value="C:chloroplast"/>
    <property type="evidence" value="ECO:0000314"/>
    <property type="project" value="UniProtKB"/>
</dbReference>
<dbReference type="GO" id="GO:0005737">
    <property type="term" value="C:cytoplasm"/>
    <property type="evidence" value="ECO:0000318"/>
    <property type="project" value="GO_Central"/>
</dbReference>
<dbReference type="GO" id="GO:0004177">
    <property type="term" value="F:aminopeptidase activity"/>
    <property type="evidence" value="ECO:0000314"/>
    <property type="project" value="UniProtKB"/>
</dbReference>
<dbReference type="GO" id="GO:0042802">
    <property type="term" value="F:identical protein binding"/>
    <property type="evidence" value="ECO:0000314"/>
    <property type="project" value="UniProtKB"/>
</dbReference>
<dbReference type="GO" id="GO:0000287">
    <property type="term" value="F:magnesium ion binding"/>
    <property type="evidence" value="ECO:0000250"/>
    <property type="project" value="UniProtKB"/>
</dbReference>
<dbReference type="GO" id="GO:0030145">
    <property type="term" value="F:manganese ion binding"/>
    <property type="evidence" value="ECO:0007669"/>
    <property type="project" value="InterPro"/>
</dbReference>
<dbReference type="GO" id="GO:0070006">
    <property type="term" value="F:metalloaminopeptidase activity"/>
    <property type="evidence" value="ECO:0007669"/>
    <property type="project" value="InterPro"/>
</dbReference>
<dbReference type="GO" id="GO:0008233">
    <property type="term" value="F:peptidase activity"/>
    <property type="evidence" value="ECO:0000318"/>
    <property type="project" value="GO_Central"/>
</dbReference>
<dbReference type="GO" id="GO:0044183">
    <property type="term" value="F:protein folding chaperone"/>
    <property type="evidence" value="ECO:0000314"/>
    <property type="project" value="UniProtKB"/>
</dbReference>
<dbReference type="GO" id="GO:0034605">
    <property type="term" value="P:cellular response to heat"/>
    <property type="evidence" value="ECO:0000314"/>
    <property type="project" value="UniProtKB"/>
</dbReference>
<dbReference type="GO" id="GO:0043171">
    <property type="term" value="P:peptide catabolic process"/>
    <property type="evidence" value="ECO:0000314"/>
    <property type="project" value="UniProtKB"/>
</dbReference>
<dbReference type="GO" id="GO:0034214">
    <property type="term" value="P:protein hexamerization"/>
    <property type="evidence" value="ECO:0000314"/>
    <property type="project" value="UniProtKB"/>
</dbReference>
<dbReference type="GO" id="GO:0006508">
    <property type="term" value="P:proteolysis"/>
    <property type="evidence" value="ECO:0000318"/>
    <property type="project" value="GO_Central"/>
</dbReference>
<dbReference type="GO" id="GO:0009611">
    <property type="term" value="P:response to wounding"/>
    <property type="evidence" value="ECO:0000270"/>
    <property type="project" value="UniProtKB"/>
</dbReference>
<dbReference type="CDD" id="cd00433">
    <property type="entry name" value="Peptidase_M17"/>
    <property type="match status" value="1"/>
</dbReference>
<dbReference type="FunFam" id="3.40.220.10:FF:000011">
    <property type="entry name" value="Leucine aminopeptidase 2, chloroplastic"/>
    <property type="match status" value="1"/>
</dbReference>
<dbReference type="FunFam" id="3.40.630.10:FF:000033">
    <property type="entry name" value="M17 leucyl aminopeptidase"/>
    <property type="match status" value="1"/>
</dbReference>
<dbReference type="Gene3D" id="3.40.220.10">
    <property type="entry name" value="Leucine Aminopeptidase, subunit E, domain 1"/>
    <property type="match status" value="1"/>
</dbReference>
<dbReference type="Gene3D" id="3.40.630.10">
    <property type="entry name" value="Zn peptidases"/>
    <property type="match status" value="1"/>
</dbReference>
<dbReference type="HAMAP" id="MF_00181">
    <property type="entry name" value="Cytosol_peptidase_M17"/>
    <property type="match status" value="1"/>
</dbReference>
<dbReference type="InterPro" id="IPR011356">
    <property type="entry name" value="Leucine_aapep/pepB"/>
</dbReference>
<dbReference type="InterPro" id="IPR043472">
    <property type="entry name" value="Macro_dom-like"/>
</dbReference>
<dbReference type="InterPro" id="IPR000819">
    <property type="entry name" value="Peptidase_M17_C"/>
</dbReference>
<dbReference type="InterPro" id="IPR023042">
    <property type="entry name" value="Peptidase_M17_leu_NH2_pept"/>
</dbReference>
<dbReference type="InterPro" id="IPR008283">
    <property type="entry name" value="Peptidase_M17_N"/>
</dbReference>
<dbReference type="NCBIfam" id="NF002076">
    <property type="entry name" value="PRK00913.2-3"/>
    <property type="match status" value="1"/>
</dbReference>
<dbReference type="PANTHER" id="PTHR11963:SF23">
    <property type="entry name" value="CYTOSOL AMINOPEPTIDASE"/>
    <property type="match status" value="1"/>
</dbReference>
<dbReference type="PANTHER" id="PTHR11963">
    <property type="entry name" value="LEUCINE AMINOPEPTIDASE-RELATED"/>
    <property type="match status" value="1"/>
</dbReference>
<dbReference type="Pfam" id="PF00883">
    <property type="entry name" value="Peptidase_M17"/>
    <property type="match status" value="1"/>
</dbReference>
<dbReference type="Pfam" id="PF02789">
    <property type="entry name" value="Peptidase_M17_N"/>
    <property type="match status" value="1"/>
</dbReference>
<dbReference type="PRINTS" id="PR00481">
    <property type="entry name" value="LAMNOPPTDASE"/>
</dbReference>
<dbReference type="SUPFAM" id="SSF52949">
    <property type="entry name" value="Macro domain-like"/>
    <property type="match status" value="1"/>
</dbReference>
<dbReference type="SUPFAM" id="SSF53187">
    <property type="entry name" value="Zn-dependent exopeptidases"/>
    <property type="match status" value="1"/>
</dbReference>
<dbReference type="PROSITE" id="PS00631">
    <property type="entry name" value="CYTOSOL_AP"/>
    <property type="match status" value="1"/>
</dbReference>
<evidence type="ECO:0000250" key="1">
    <source>
        <dbReference type="UniProtKB" id="P28839"/>
    </source>
</evidence>
<evidence type="ECO:0000250" key="2">
    <source>
        <dbReference type="UniProtKB" id="P30184"/>
    </source>
</evidence>
<evidence type="ECO:0000255" key="3"/>
<evidence type="ECO:0000269" key="4">
    <source>
    </source>
</evidence>
<evidence type="ECO:0000269" key="5">
    <source>
    </source>
</evidence>
<evidence type="ECO:0000269" key="6">
    <source>
    </source>
</evidence>
<evidence type="ECO:0000269" key="7">
    <source>
    </source>
</evidence>
<evidence type="ECO:0000303" key="8">
    <source>
    </source>
</evidence>
<evidence type="ECO:0000305" key="9"/>
<accession>Q42876</accession>
<name>AMPLN_SOLLC</name>
<keyword id="KW-0031">Aminopeptidase</keyword>
<keyword id="KW-0143">Chaperone</keyword>
<keyword id="KW-0150">Chloroplast</keyword>
<keyword id="KW-0378">Hydrolase</keyword>
<keyword id="KW-0464">Manganese</keyword>
<keyword id="KW-0479">Metal-binding</keyword>
<keyword id="KW-0934">Plastid</keyword>
<keyword id="KW-0645">Protease</keyword>
<keyword id="KW-1185">Reference proteome</keyword>
<keyword id="KW-0346">Stress response</keyword>
<keyword id="KW-0809">Transit peptide</keyword>
<proteinExistence type="evidence at protein level"/>